<organism>
    <name type="scientific">Saguinus oedipus</name>
    <name type="common">Cotton-top tamarin</name>
    <dbReference type="NCBI Taxonomy" id="9490"/>
    <lineage>
        <taxon>Eukaryota</taxon>
        <taxon>Metazoa</taxon>
        <taxon>Chordata</taxon>
        <taxon>Craniata</taxon>
        <taxon>Vertebrata</taxon>
        <taxon>Euteleostomi</taxon>
        <taxon>Mammalia</taxon>
        <taxon>Eutheria</taxon>
        <taxon>Euarchontoglires</taxon>
        <taxon>Primates</taxon>
        <taxon>Haplorrhini</taxon>
        <taxon>Platyrrhini</taxon>
        <taxon>Cebidae</taxon>
        <taxon>Callitrichinae</taxon>
        <taxon>Saguinus</taxon>
    </lineage>
</organism>
<reference key="1">
    <citation type="journal article" date="2002" name="Mol. Biol. Evol.">
        <title>Diversifying selection of the tumor-growth promoter angiogenin in primate evolution.</title>
        <authorList>
            <person name="Zhang J."/>
            <person name="Rosenberg H.F."/>
        </authorList>
    </citation>
    <scope>NUCLEOTIDE SEQUENCE [GENOMIC DNA]</scope>
</reference>
<comment type="function">
    <text evidence="1 2">Secreted ribonuclease that can either promote or restrict cell proliferation of target cells, depending on the context. Endocytosed in target cells via its receptor PLXNB2 and translocates to the cytoplasm or nucleus. Under stress conditions, localizes to the cytoplasm and promotes the assembly of stress granules (SGs): specifically cleaves a subset of tRNAs within anticodon loops to produce tRNA-derived stress-induced fragments (tiRNAs), resulting in translation repression and inhibition of cell proliferation (By similarity). tiRNas also prevent formation of apoptosome, thereby promoting cell survival (By similarity). Preferentially cleaves RNAs between a pyrimidine and an adenosine residue, suggesting that it cleaves the anticodon loop of tRNA(Ala) (32-UUAGCAU-38) after positions 33 and 36. Cleaves a subset of tRNAs, including tRNA(Ala), tRNA(Glu), tRNA(Gly), tRNA(Lys), tRNA(Val), tRNA(His), tRNA(Asp) and tRNA(Sec). Under growth conditions and in differentiated cells, translocates to the nucleus and stimulates ribosomal RNA (rRNA) transcription, including that containing the initiation site sequences of 45S rRNA, thereby promoting cell growth and proliferation. Angiogenin induces vascularization of normal and malignant tissues via its ability to promote rRNA transcription. Involved in hematopoietic stem and progenitor cell (HSPC) growth and survival by promoting rRNA transcription in growth conditions and inhibiting translation in response to stress, respectively. Mediates the crosstalk between myeloid and intestinal epithelial cells to protect the intestinal epithelial barrier integrity: secreted by myeloid cells and promotes intestinal epithelial cells proliferation and survival (By similarity). Also mediates osteoclast-endothelial cell crosstalk in growing bone: produced by osteoclasts and protects the neighboring vascular cells against senescence by promoting rRNA transcription (By similarity).</text>
</comment>
<comment type="activity regulation">
    <text evidence="1">Has weak tRNA ribonuclease activity by itself due to partial autoinhibition by its C-terminus, which folds into a short alpha-helix that partially occludes the substrate-binding site. In absence of stress, the ribonuclease activity is inhibited by RNH1 in the cytoplasm. In response to stress, dissociates from RNH1 in the cytoplasm and associates with cytoplasmic ribosomes with vacant A-sites: ribosomes directly activate the tRNA ribonuclease activity of ANG by refolding the C-terminal alpha-helix. In response to stress, the angiogenic activity of ANG is inhibited by RNH1 in the nucleus.</text>
</comment>
<comment type="subunit">
    <text evidence="1">Homodimer. Interacts with RNH1; inhibiting ANG ribonuclease activity. Interacts with PCNA.</text>
</comment>
<comment type="subcellular location">
    <subcellularLocation>
        <location evidence="1">Secreted</location>
    </subcellularLocation>
    <subcellularLocation>
        <location evidence="1">Nucleus</location>
    </subcellularLocation>
    <subcellularLocation>
        <location evidence="1">Nucleus</location>
        <location evidence="1">Nucleolus</location>
    </subcellularLocation>
    <subcellularLocation>
        <location evidence="1">Cytoplasm</location>
        <location evidence="1">Stress granule</location>
    </subcellularLocation>
    <text evidence="1">The secreted protein is rapidly endocytosed by target cells following interaction with PLXNB2 receptor and translocated to the cytoplasm and nucleus. In the nucleus, accumulates in the nucleolus and binds to DNA.</text>
</comment>
<comment type="similarity">
    <text evidence="3">Belongs to the pancreatic ribonuclease family.</text>
</comment>
<proteinExistence type="inferred from homology"/>
<keyword id="KW-0037">Angiogenesis</keyword>
<keyword id="KW-0963">Cytoplasm</keyword>
<keyword id="KW-0217">Developmental protein</keyword>
<keyword id="KW-0221">Differentiation</keyword>
<keyword id="KW-1015">Disulfide bond</keyword>
<keyword id="KW-0238">DNA-binding</keyword>
<keyword id="KW-0255">Endonuclease</keyword>
<keyword id="KW-0378">Hydrolase</keyword>
<keyword id="KW-0540">Nuclease</keyword>
<keyword id="KW-0539">Nucleus</keyword>
<keyword id="KW-0652">Protein synthesis inhibitor</keyword>
<keyword id="KW-0873">Pyrrolidone carboxylic acid</keyword>
<keyword id="KW-0964">Secreted</keyword>
<keyword id="KW-0732">Signal</keyword>
<keyword id="KW-0346">Stress response</keyword>
<evidence type="ECO:0000250" key="1">
    <source>
        <dbReference type="UniProtKB" id="P03950"/>
    </source>
</evidence>
<evidence type="ECO:0000250" key="2">
    <source>
        <dbReference type="UniProtKB" id="P21570"/>
    </source>
</evidence>
<evidence type="ECO:0000305" key="3"/>
<gene>
    <name type="primary">ANG</name>
    <name type="synonym">RNASE5</name>
</gene>
<name>ANGI_SAGOE</name>
<protein>
    <recommendedName>
        <fullName>Angiogenin</fullName>
        <ecNumber evidence="1">3.1.27.-</ecNumber>
    </recommendedName>
    <alternativeName>
        <fullName>Ribonuclease 5</fullName>
        <shortName>RNase 5</shortName>
    </alternativeName>
</protein>
<dbReference type="EC" id="3.1.27.-" evidence="1"/>
<dbReference type="EMBL" id="AF441668">
    <property type="protein sequence ID" value="AAL61650.1"/>
    <property type="molecule type" value="Genomic_DNA"/>
</dbReference>
<dbReference type="SMR" id="Q8WN62"/>
<dbReference type="GO" id="GO:0032311">
    <property type="term" value="C:angiogenin-PRI complex"/>
    <property type="evidence" value="ECO:0000250"/>
    <property type="project" value="UniProtKB"/>
</dbReference>
<dbReference type="GO" id="GO:0005604">
    <property type="term" value="C:basement membrane"/>
    <property type="evidence" value="ECO:0000250"/>
    <property type="project" value="UniProtKB"/>
</dbReference>
<dbReference type="GO" id="GO:0005737">
    <property type="term" value="C:cytoplasm"/>
    <property type="evidence" value="ECO:0000250"/>
    <property type="project" value="UniProtKB"/>
</dbReference>
<dbReference type="GO" id="GO:0010494">
    <property type="term" value="C:cytoplasmic stress granule"/>
    <property type="evidence" value="ECO:0007669"/>
    <property type="project" value="UniProtKB-SubCell"/>
</dbReference>
<dbReference type="GO" id="GO:0030139">
    <property type="term" value="C:endocytic vesicle"/>
    <property type="evidence" value="ECO:0000250"/>
    <property type="project" value="UniProtKB"/>
</dbReference>
<dbReference type="GO" id="GO:0005615">
    <property type="term" value="C:extracellular space"/>
    <property type="evidence" value="ECO:0000250"/>
    <property type="project" value="UniProtKB"/>
</dbReference>
<dbReference type="GO" id="GO:0005730">
    <property type="term" value="C:nucleolus"/>
    <property type="evidence" value="ECO:0000250"/>
    <property type="project" value="UniProtKB"/>
</dbReference>
<dbReference type="GO" id="GO:0005634">
    <property type="term" value="C:nucleus"/>
    <property type="evidence" value="ECO:0000250"/>
    <property type="project" value="UniProtKB"/>
</dbReference>
<dbReference type="GO" id="GO:0003779">
    <property type="term" value="F:actin binding"/>
    <property type="evidence" value="ECO:0000250"/>
    <property type="project" value="UniProtKB"/>
</dbReference>
<dbReference type="GO" id="GO:0005507">
    <property type="term" value="F:copper ion binding"/>
    <property type="evidence" value="ECO:0000250"/>
    <property type="project" value="UniProtKB"/>
</dbReference>
<dbReference type="GO" id="GO:0003677">
    <property type="term" value="F:DNA binding"/>
    <property type="evidence" value="ECO:0007669"/>
    <property type="project" value="UniProtKB-KW"/>
</dbReference>
<dbReference type="GO" id="GO:0004519">
    <property type="term" value="F:endonuclease activity"/>
    <property type="evidence" value="ECO:0007669"/>
    <property type="project" value="UniProtKB-KW"/>
</dbReference>
<dbReference type="GO" id="GO:0008201">
    <property type="term" value="F:heparin binding"/>
    <property type="evidence" value="ECO:0000250"/>
    <property type="project" value="UniProtKB"/>
</dbReference>
<dbReference type="GO" id="GO:0042803">
    <property type="term" value="F:protein homodimerization activity"/>
    <property type="evidence" value="ECO:0000250"/>
    <property type="project" value="UniProtKB"/>
</dbReference>
<dbReference type="GO" id="GO:0004540">
    <property type="term" value="F:RNA nuclease activity"/>
    <property type="evidence" value="ECO:0000250"/>
    <property type="project" value="UniProtKB"/>
</dbReference>
<dbReference type="GO" id="GO:0005102">
    <property type="term" value="F:signaling receptor binding"/>
    <property type="evidence" value="ECO:0000250"/>
    <property type="project" value="UniProtKB"/>
</dbReference>
<dbReference type="GO" id="GO:0004549">
    <property type="term" value="F:tRNA-specific ribonuclease activity"/>
    <property type="evidence" value="ECO:0000250"/>
    <property type="project" value="UniProtKB"/>
</dbReference>
<dbReference type="GO" id="GO:0030041">
    <property type="term" value="P:actin filament polymerization"/>
    <property type="evidence" value="ECO:0000250"/>
    <property type="project" value="UniProtKB"/>
</dbReference>
<dbReference type="GO" id="GO:0001525">
    <property type="term" value="P:angiogenesis"/>
    <property type="evidence" value="ECO:0000250"/>
    <property type="project" value="UniProtKB"/>
</dbReference>
<dbReference type="GO" id="GO:0019731">
    <property type="term" value="P:antibacterial humoral response"/>
    <property type="evidence" value="ECO:0007669"/>
    <property type="project" value="TreeGrafter"/>
</dbReference>
<dbReference type="GO" id="GO:0061844">
    <property type="term" value="P:antimicrobial humoral immune response mediated by antimicrobial peptide"/>
    <property type="evidence" value="ECO:0007669"/>
    <property type="project" value="TreeGrafter"/>
</dbReference>
<dbReference type="GO" id="GO:0050830">
    <property type="term" value="P:defense response to Gram-positive bacterium"/>
    <property type="evidence" value="ECO:0007669"/>
    <property type="project" value="TreeGrafter"/>
</dbReference>
<dbReference type="GO" id="GO:0071425">
    <property type="term" value="P:hematopoietic stem cell proliferation"/>
    <property type="evidence" value="ECO:0000250"/>
    <property type="project" value="UniProtKB"/>
</dbReference>
<dbReference type="GO" id="GO:0045087">
    <property type="term" value="P:innate immune response"/>
    <property type="evidence" value="ECO:0007669"/>
    <property type="project" value="TreeGrafter"/>
</dbReference>
<dbReference type="GO" id="GO:0043066">
    <property type="term" value="P:negative regulation of apoptotic process"/>
    <property type="evidence" value="ECO:0000250"/>
    <property type="project" value="UniProtKB"/>
</dbReference>
<dbReference type="GO" id="GO:0048662">
    <property type="term" value="P:negative regulation of smooth muscle cell proliferation"/>
    <property type="evidence" value="ECO:0000250"/>
    <property type="project" value="UniProtKB"/>
</dbReference>
<dbReference type="GO" id="GO:0032055">
    <property type="term" value="P:negative regulation of translation in response to stress"/>
    <property type="evidence" value="ECO:0000250"/>
    <property type="project" value="UniProtKB"/>
</dbReference>
<dbReference type="GO" id="GO:0001938">
    <property type="term" value="P:positive regulation of endothelial cell proliferation"/>
    <property type="evidence" value="ECO:0000250"/>
    <property type="project" value="UniProtKB"/>
</dbReference>
<dbReference type="GO" id="GO:0050714">
    <property type="term" value="P:positive regulation of protein secretion"/>
    <property type="evidence" value="ECO:0000250"/>
    <property type="project" value="UniProtKB"/>
</dbReference>
<dbReference type="GO" id="GO:0001666">
    <property type="term" value="P:response to hypoxia"/>
    <property type="evidence" value="ECO:0000250"/>
    <property type="project" value="UniProtKB"/>
</dbReference>
<dbReference type="GO" id="GO:0009303">
    <property type="term" value="P:rRNA transcription"/>
    <property type="evidence" value="ECO:0000250"/>
    <property type="project" value="UniProtKB"/>
</dbReference>
<dbReference type="GO" id="GO:0023052">
    <property type="term" value="P:signaling"/>
    <property type="evidence" value="ECO:0000250"/>
    <property type="project" value="UniProtKB"/>
</dbReference>
<dbReference type="GO" id="GO:0034063">
    <property type="term" value="P:stress granule assembly"/>
    <property type="evidence" value="ECO:0000250"/>
    <property type="project" value="UniProtKB"/>
</dbReference>
<dbReference type="CDD" id="cd06265">
    <property type="entry name" value="RNase_A_canonical"/>
    <property type="match status" value="1"/>
</dbReference>
<dbReference type="FunFam" id="3.10.130.10:FF:000001">
    <property type="entry name" value="Ribonuclease pancreatic"/>
    <property type="match status" value="1"/>
</dbReference>
<dbReference type="Gene3D" id="3.10.130.10">
    <property type="entry name" value="Ribonuclease A-like domain"/>
    <property type="match status" value="1"/>
</dbReference>
<dbReference type="InterPro" id="IPR001427">
    <property type="entry name" value="RNaseA"/>
</dbReference>
<dbReference type="InterPro" id="IPR036816">
    <property type="entry name" value="RNaseA-like_dom_sf"/>
</dbReference>
<dbReference type="InterPro" id="IPR023411">
    <property type="entry name" value="RNaseA_AS"/>
</dbReference>
<dbReference type="InterPro" id="IPR023412">
    <property type="entry name" value="RNaseA_domain"/>
</dbReference>
<dbReference type="PANTHER" id="PTHR11437:SF60">
    <property type="entry name" value="ANGIOGENIN"/>
    <property type="match status" value="1"/>
</dbReference>
<dbReference type="PANTHER" id="PTHR11437">
    <property type="entry name" value="RIBONUCLEASE"/>
    <property type="match status" value="1"/>
</dbReference>
<dbReference type="Pfam" id="PF00074">
    <property type="entry name" value="RnaseA"/>
    <property type="match status" value="1"/>
</dbReference>
<dbReference type="PRINTS" id="PR00794">
    <property type="entry name" value="RIBONUCLEASE"/>
</dbReference>
<dbReference type="SMART" id="SM00092">
    <property type="entry name" value="RNAse_Pc"/>
    <property type="match status" value="1"/>
</dbReference>
<dbReference type="SUPFAM" id="SSF54076">
    <property type="entry name" value="RNase A-like"/>
    <property type="match status" value="1"/>
</dbReference>
<dbReference type="PROSITE" id="PS00127">
    <property type="entry name" value="RNASE_PANCREATIC"/>
    <property type="match status" value="1"/>
</dbReference>
<accession>Q8WN62</accession>
<sequence length="146" mass="16435">MVMGLHLLFLVFILGLGLTPPTLAQNDLRYNRFLEEHYDPKTKNGNDRYCDKMMRLRNMISPCKAINTFIHGKKESIKAICGTENGVPYNGNKRKSKSAFQVTICKHRGGSPRPPCQYRATAGSRNVVVACENGLPVHLDESIFRP</sequence>
<feature type="signal peptide" evidence="1">
    <location>
        <begin position="1"/>
        <end position="24"/>
    </location>
</feature>
<feature type="chain" id="PRO_0000030852" description="Angiogenin">
    <location>
        <begin position="25"/>
        <end position="146"/>
    </location>
</feature>
<feature type="short sequence motif" description="Nucleolar localization signal" evidence="1">
    <location>
        <begin position="55"/>
        <end position="59"/>
    </location>
</feature>
<feature type="active site" description="Proton acceptor" evidence="1">
    <location>
        <position position="37"/>
    </location>
</feature>
<feature type="active site" description="Proton donor" evidence="1">
    <location>
        <position position="138"/>
    </location>
</feature>
<feature type="binding site" evidence="1">
    <location>
        <position position="105"/>
    </location>
    <ligand>
        <name>tRNA</name>
        <dbReference type="ChEBI" id="CHEBI:17843"/>
    </ligand>
</feature>
<feature type="binding site" evidence="1">
    <location>
        <position position="127"/>
    </location>
    <ligand>
        <name>tRNA</name>
        <dbReference type="ChEBI" id="CHEBI:17843"/>
    </ligand>
</feature>
<feature type="modified residue" description="Pyrrolidone carboxylic acid" evidence="1">
    <location>
        <position position="25"/>
    </location>
</feature>
<feature type="disulfide bond" evidence="1">
    <location>
        <begin position="50"/>
        <end position="105"/>
    </location>
</feature>
<feature type="disulfide bond" evidence="1">
    <location>
        <begin position="63"/>
        <end position="116"/>
    </location>
</feature>
<feature type="disulfide bond" evidence="1">
    <location>
        <begin position="81"/>
        <end position="131"/>
    </location>
</feature>